<geneLocation type="plasmid">
    <name>pANL</name>
</geneLocation>
<feature type="signal peptide" evidence="2">
    <location>
        <begin position="1"/>
        <end position="31"/>
    </location>
</feature>
<feature type="chain" id="PRO_0000004695" description="Catalase-related peroxidase">
    <location>
        <begin position="32"/>
        <end position="339"/>
    </location>
</feature>
<feature type="active site" evidence="1">
    <location>
        <position position="58"/>
    </location>
</feature>
<feature type="binding site" description="axial binding residue" evidence="1">
    <location>
        <position position="328"/>
    </location>
    <ligand>
        <name>heme</name>
        <dbReference type="ChEBI" id="CHEBI:30413"/>
    </ligand>
    <ligandPart>
        <name>Fe</name>
        <dbReference type="ChEBI" id="CHEBI:18248"/>
    </ligandPart>
</feature>
<protein>
    <recommendedName>
        <fullName>Catalase-related peroxidase</fullName>
        <ecNumber>1.11.1.-</ecNumber>
    </recommendedName>
    <alternativeName>
        <fullName>Protein SrpA</fullName>
    </alternativeName>
    <alternativeName>
        <fullName>Sulfur-regulated plasmid-encoded protein A</fullName>
    </alternativeName>
</protein>
<dbReference type="EC" id="1.11.1.-"/>
<dbReference type="EMBL" id="U20224">
    <property type="protein sequence ID" value="AAA85847.1"/>
    <property type="status" value="ALT_INIT"/>
    <property type="molecule type" value="Genomic_DNA"/>
</dbReference>
<dbReference type="EMBL" id="AF441790">
    <property type="protein sequence ID" value="AAM81171.2"/>
    <property type="molecule type" value="Genomic_DNA"/>
</dbReference>
<dbReference type="EMBL" id="CP000101">
    <property type="protein sequence ID" value="ABB58649.1"/>
    <property type="status" value="ALT_INIT"/>
    <property type="molecule type" value="Genomic_DNA"/>
</dbReference>
<dbReference type="RefSeq" id="NP_665784.2">
    <property type="nucleotide sequence ID" value="NC_004073.2"/>
</dbReference>
<dbReference type="RefSeq" id="WP_011055161.1">
    <property type="nucleotide sequence ID" value="NZ_JACJTX010000007.1"/>
</dbReference>
<dbReference type="SMR" id="Q55025"/>
<dbReference type="PeroxiBase" id="6125">
    <property type="entry name" value="SeKat1"/>
</dbReference>
<dbReference type="PaxDb" id="1140-Synpcc7942_B2620"/>
<dbReference type="KEGG" id="syf:Synpcc7942_B2620"/>
<dbReference type="eggNOG" id="COG0753">
    <property type="taxonomic scope" value="Bacteria"/>
</dbReference>
<dbReference type="HOGENOM" id="CLU_045961_1_0_3"/>
<dbReference type="OrthoDB" id="255727at2"/>
<dbReference type="BioCyc" id="SYNEL:SYNPCC7942_B2620-MONOMER"/>
<dbReference type="Proteomes" id="UP000889800">
    <property type="component" value="Plasmid pANL"/>
</dbReference>
<dbReference type="GO" id="GO:0005737">
    <property type="term" value="C:cytoplasm"/>
    <property type="evidence" value="ECO:0007669"/>
    <property type="project" value="TreeGrafter"/>
</dbReference>
<dbReference type="GO" id="GO:0042597">
    <property type="term" value="C:periplasmic space"/>
    <property type="evidence" value="ECO:0000314"/>
    <property type="project" value="UniProtKB"/>
</dbReference>
<dbReference type="GO" id="GO:0004096">
    <property type="term" value="F:catalase activity"/>
    <property type="evidence" value="ECO:0007669"/>
    <property type="project" value="InterPro"/>
</dbReference>
<dbReference type="GO" id="GO:0020037">
    <property type="term" value="F:heme binding"/>
    <property type="evidence" value="ECO:0000250"/>
    <property type="project" value="UniProtKB"/>
</dbReference>
<dbReference type="GO" id="GO:0005506">
    <property type="term" value="F:iron ion binding"/>
    <property type="evidence" value="ECO:0000250"/>
    <property type="project" value="UniProtKB"/>
</dbReference>
<dbReference type="GO" id="GO:0004601">
    <property type="term" value="F:peroxidase activity"/>
    <property type="evidence" value="ECO:0000250"/>
    <property type="project" value="UniProtKB"/>
</dbReference>
<dbReference type="GO" id="GO:0042744">
    <property type="term" value="P:hydrogen peroxide catabolic process"/>
    <property type="evidence" value="ECO:0007669"/>
    <property type="project" value="TreeGrafter"/>
</dbReference>
<dbReference type="GO" id="GO:0042743">
    <property type="term" value="P:hydrogen peroxide metabolic process"/>
    <property type="evidence" value="ECO:0000250"/>
    <property type="project" value="UniProtKB"/>
</dbReference>
<dbReference type="GO" id="GO:0042542">
    <property type="term" value="P:response to hydrogen peroxide"/>
    <property type="evidence" value="ECO:0007669"/>
    <property type="project" value="TreeGrafter"/>
</dbReference>
<dbReference type="CDD" id="cd08153">
    <property type="entry name" value="srpA_like"/>
    <property type="match status" value="1"/>
</dbReference>
<dbReference type="Gene3D" id="1.20.1280.120">
    <property type="match status" value="1"/>
</dbReference>
<dbReference type="Gene3D" id="2.40.180.10">
    <property type="entry name" value="Catalase core domain"/>
    <property type="match status" value="1"/>
</dbReference>
<dbReference type="InterPro" id="IPR018028">
    <property type="entry name" value="Catalase"/>
</dbReference>
<dbReference type="InterPro" id="IPR011614">
    <property type="entry name" value="Catalase_core"/>
</dbReference>
<dbReference type="InterPro" id="IPR020835">
    <property type="entry name" value="Catalase_sf"/>
</dbReference>
<dbReference type="InterPro" id="IPR024168">
    <property type="entry name" value="Catalase_SrpA-type_pred"/>
</dbReference>
<dbReference type="PANTHER" id="PTHR11465">
    <property type="entry name" value="CATALASE"/>
    <property type="match status" value="1"/>
</dbReference>
<dbReference type="PANTHER" id="PTHR11465:SF9">
    <property type="entry name" value="CATALASE"/>
    <property type="match status" value="1"/>
</dbReference>
<dbReference type="Pfam" id="PF00199">
    <property type="entry name" value="Catalase"/>
    <property type="match status" value="1"/>
</dbReference>
<dbReference type="PIRSF" id="PIRSF000296">
    <property type="entry name" value="SrpA"/>
    <property type="match status" value="1"/>
</dbReference>
<dbReference type="PRINTS" id="PR00067">
    <property type="entry name" value="CATALASE"/>
</dbReference>
<dbReference type="SMART" id="SM01060">
    <property type="entry name" value="Catalase"/>
    <property type="match status" value="1"/>
</dbReference>
<dbReference type="SUPFAM" id="SSF56634">
    <property type="entry name" value="Heme-dependent catalase-like"/>
    <property type="match status" value="1"/>
</dbReference>
<dbReference type="PROSITE" id="PS51402">
    <property type="entry name" value="CATALASE_3"/>
    <property type="match status" value="1"/>
</dbReference>
<comment type="function">
    <text evidence="1">Has an organic peroxide-dependent peroxidase activity.</text>
</comment>
<comment type="cofactor">
    <cofactor evidence="1">
        <name>heme</name>
        <dbReference type="ChEBI" id="CHEBI:30413"/>
    </cofactor>
</comment>
<comment type="subcellular location">
    <subcellularLocation>
        <location evidence="2">Periplasm</location>
    </subcellularLocation>
</comment>
<comment type="induction">
    <text evidence="2">By sulfur deprivation.</text>
</comment>
<comment type="disruption phenotype">
    <text evidence="2">No significant differences in the growth kinetics of cells grown in medium containing high or low concentrations of sulfate.</text>
</comment>
<comment type="similarity">
    <text evidence="3">Belongs to the catalase family.</text>
</comment>
<comment type="sequence caution" evidence="3">
    <conflict type="erroneous initiation">
        <sequence resource="EMBL-CDS" id="AAA85847"/>
    </conflict>
    <text>Extended N-terminus.</text>
</comment>
<comment type="sequence caution" evidence="3">
    <conflict type="erroneous initiation">
        <sequence resource="EMBL-CDS" id="ABB58649"/>
    </conflict>
    <text>Extended N-terminus.</text>
</comment>
<accession>Q55025</accession>
<accession>Q8KUU0</accession>
<sequence length="339" mass="37055">MIRIRNRWFRWLAIALASLVASIGIATVGFAATGVTPDQVLSAIEGTFGVNVGQRRNHIKGTCAVGNFVATTEAKTYSRSPLFSGQSIPVVARFSLAGGNPKAPDTAKNPRGLGLQFQLPNNRFLNMALLNTPVFGVASPEGFYENILAIRPDPTTGKPDPEKVKAFREKYPENKAQAAFLASNNPPTSYANTSYFGLHAFKFINQTNQTRLVRWQFVPQDGEKRLTDAELQAAPANFLEQKLIERTQDSPVKWDFWITLGQPGDAEDNPTIAWPSDRQQVKVGTLTLTAASPQPGAACEGINYDPLVLSDGIEPTNDPVLQFRSGVYALSYSKRTRGL</sequence>
<evidence type="ECO:0000250" key="1"/>
<evidence type="ECO:0000269" key="2">
    <source>
    </source>
</evidence>
<evidence type="ECO:0000305" key="3"/>
<name>SRPA_SYNE7</name>
<gene>
    <name type="primary">srpA</name>
    <name type="ordered locus">Synpcc7942_B2620</name>
    <name type="ORF">pANL46</name>
</gene>
<organism>
    <name type="scientific">Synechococcus elongatus (strain ATCC 33912 / PCC 7942 / FACHB-805)</name>
    <name type="common">Anacystis nidulans R2</name>
    <dbReference type="NCBI Taxonomy" id="1140"/>
    <lineage>
        <taxon>Bacteria</taxon>
        <taxon>Bacillati</taxon>
        <taxon>Cyanobacteriota</taxon>
        <taxon>Cyanophyceae</taxon>
        <taxon>Synechococcales</taxon>
        <taxon>Synechococcaceae</taxon>
        <taxon>Synechococcus</taxon>
    </lineage>
</organism>
<keyword id="KW-0903">Direct protein sequencing</keyword>
<keyword id="KW-0349">Heme</keyword>
<keyword id="KW-0408">Iron</keyword>
<keyword id="KW-0479">Metal-binding</keyword>
<keyword id="KW-0560">Oxidoreductase</keyword>
<keyword id="KW-0574">Periplasm</keyword>
<keyword id="KW-0575">Peroxidase</keyword>
<keyword id="KW-0614">Plasmid</keyword>
<keyword id="KW-1185">Reference proteome</keyword>
<keyword id="KW-0732">Signal</keyword>
<keyword id="KW-0346">Stress response</keyword>
<reference key="1">
    <citation type="journal article" date="1995" name="J. Bacteriol.">
        <title>Genes encoded on a cyanobacterial plasmid are transcriptionally regulated by sulfur availability and CysR.</title>
        <authorList>
            <person name="Nicholson M.L."/>
            <person name="Laudenbach D.E."/>
        </authorList>
    </citation>
    <scope>NUCLEOTIDE SEQUENCE [GENOMIC DNA]</scope>
    <scope>PROTEIN SEQUENCE OF 32-52</scope>
    <scope>SUBCELLULAR LOCATION</scope>
    <scope>INDUCTION</scope>
    <scope>DISRUPTION PHENOTYPE</scope>
    <scope>SIGNAL</scope>
    <source>
        <strain>ATCC 33912 / PCC 7942 / FACHB-805</strain>
        <plasmid>pANL</plasmid>
    </source>
</reference>
<reference key="2">
    <citation type="journal article" date="2008" name="Plasmid">
        <title>The complete sequence and functional analysis of pANL, the large plasmid of the unicellular freshwater cyanobacterium Synechococcus elongatus PCC 7942.</title>
        <authorList>
            <person name="Chen Y."/>
            <person name="Holtman C.K."/>
            <person name="Magnuson R.D."/>
            <person name="Youderian P.A."/>
            <person name="Golden S.S."/>
        </authorList>
    </citation>
    <scope>NUCLEOTIDE SEQUENCE [GENOMIC DNA]</scope>
    <source>
        <strain>ATCC 33912 / PCC 7942 / FACHB-805</strain>
        <plasmid>pANL</plasmid>
    </source>
</reference>
<reference key="3">
    <citation type="submission" date="2005-08" db="EMBL/GenBank/DDBJ databases">
        <title>Complete sequence of plasmid 1 of Synechococcus elongatus PCC 7942.</title>
        <authorList>
            <consortium name="US DOE Joint Genome Institute"/>
            <person name="Copeland A."/>
            <person name="Lucas S."/>
            <person name="Lapidus A."/>
            <person name="Barry K."/>
            <person name="Detter J.C."/>
            <person name="Glavina T."/>
            <person name="Hammon N."/>
            <person name="Israni S."/>
            <person name="Pitluck S."/>
            <person name="Schmutz J."/>
            <person name="Larimer F."/>
            <person name="Land M."/>
            <person name="Kyrpides N."/>
            <person name="Lykidis A."/>
            <person name="Golden S."/>
            <person name="Richardson P."/>
        </authorList>
    </citation>
    <scope>NUCLEOTIDE SEQUENCE [LARGE SCALE GENOMIC DNA]</scope>
    <source>
        <strain>ATCC 33912 / PCC 7942 / FACHB-805</strain>
        <plasmid>pANL</plasmid>
    </source>
</reference>
<proteinExistence type="evidence at protein level"/>